<dbReference type="EC" id="1.4.3.5" evidence="1"/>
<dbReference type="EMBL" id="Z99494">
    <property type="protein sequence ID" value="CAB16686.1"/>
    <property type="molecule type" value="Genomic_DNA"/>
</dbReference>
<dbReference type="EMBL" id="AL583924">
    <property type="protein sequence ID" value="CAC31086.1"/>
    <property type="status" value="ALT_INIT"/>
    <property type="molecule type" value="Genomic_DNA"/>
</dbReference>
<dbReference type="PIR" id="F87175">
    <property type="entry name" value="F87175"/>
</dbReference>
<dbReference type="PIR" id="T45352">
    <property type="entry name" value="T45352"/>
</dbReference>
<dbReference type="SMR" id="O33065"/>
<dbReference type="STRING" id="272631.gene:17575984"/>
<dbReference type="KEGG" id="mle:ML2131"/>
<dbReference type="Leproma" id="ML2131"/>
<dbReference type="eggNOG" id="COG0259">
    <property type="taxonomic scope" value="Bacteria"/>
</dbReference>
<dbReference type="HOGENOM" id="CLU_032263_2_2_11"/>
<dbReference type="UniPathway" id="UPA01068">
    <property type="reaction ID" value="UER00304"/>
</dbReference>
<dbReference type="UniPathway" id="UPA01068">
    <property type="reaction ID" value="UER00305"/>
</dbReference>
<dbReference type="Proteomes" id="UP000000806">
    <property type="component" value="Chromosome"/>
</dbReference>
<dbReference type="GO" id="GO:0010181">
    <property type="term" value="F:FMN binding"/>
    <property type="evidence" value="ECO:0007669"/>
    <property type="project" value="UniProtKB-UniRule"/>
</dbReference>
<dbReference type="GO" id="GO:0004733">
    <property type="term" value="F:pyridoxamine phosphate oxidase activity"/>
    <property type="evidence" value="ECO:0007669"/>
    <property type="project" value="UniProtKB-UniRule"/>
</dbReference>
<dbReference type="GO" id="GO:0008615">
    <property type="term" value="P:pyridoxine biosynthetic process"/>
    <property type="evidence" value="ECO:0007669"/>
    <property type="project" value="UniProtKB-KW"/>
</dbReference>
<dbReference type="Gene3D" id="2.30.110.10">
    <property type="entry name" value="Electron Transport, Fmn-binding Protein, Chain A"/>
    <property type="match status" value="1"/>
</dbReference>
<dbReference type="HAMAP" id="MF_01629">
    <property type="entry name" value="PdxH"/>
    <property type="match status" value="1"/>
</dbReference>
<dbReference type="InterPro" id="IPR000659">
    <property type="entry name" value="Pyridox_Oxase"/>
</dbReference>
<dbReference type="InterPro" id="IPR019740">
    <property type="entry name" value="Pyridox_Oxase_CS"/>
</dbReference>
<dbReference type="InterPro" id="IPR011576">
    <property type="entry name" value="Pyridox_Oxase_N"/>
</dbReference>
<dbReference type="InterPro" id="IPR019576">
    <property type="entry name" value="Pyridoxamine_oxidase_dimer_C"/>
</dbReference>
<dbReference type="InterPro" id="IPR012349">
    <property type="entry name" value="Split_barrel_FMN-bd"/>
</dbReference>
<dbReference type="NCBIfam" id="TIGR00558">
    <property type="entry name" value="pdxH"/>
    <property type="match status" value="1"/>
</dbReference>
<dbReference type="NCBIfam" id="NF004231">
    <property type="entry name" value="PRK05679.1"/>
    <property type="match status" value="1"/>
</dbReference>
<dbReference type="PANTHER" id="PTHR10851:SF0">
    <property type="entry name" value="PYRIDOXINE-5'-PHOSPHATE OXIDASE"/>
    <property type="match status" value="1"/>
</dbReference>
<dbReference type="PANTHER" id="PTHR10851">
    <property type="entry name" value="PYRIDOXINE-5-PHOSPHATE OXIDASE"/>
    <property type="match status" value="1"/>
</dbReference>
<dbReference type="Pfam" id="PF10590">
    <property type="entry name" value="PNP_phzG_C"/>
    <property type="match status" value="1"/>
</dbReference>
<dbReference type="Pfam" id="PF01243">
    <property type="entry name" value="PNPOx_N"/>
    <property type="match status" value="1"/>
</dbReference>
<dbReference type="PIRSF" id="PIRSF000190">
    <property type="entry name" value="Pyd_amn-ph_oxd"/>
    <property type="match status" value="1"/>
</dbReference>
<dbReference type="SUPFAM" id="SSF50475">
    <property type="entry name" value="FMN-binding split barrel"/>
    <property type="match status" value="1"/>
</dbReference>
<dbReference type="PROSITE" id="PS01064">
    <property type="entry name" value="PYRIDOX_OXIDASE"/>
    <property type="match status" value="1"/>
</dbReference>
<name>PDXH_MYCLE</name>
<reference key="1">
    <citation type="journal article" date="2001" name="Nature">
        <title>Massive gene decay in the leprosy bacillus.</title>
        <authorList>
            <person name="Cole S.T."/>
            <person name="Eiglmeier K."/>
            <person name="Parkhill J."/>
            <person name="James K.D."/>
            <person name="Thomson N.R."/>
            <person name="Wheeler P.R."/>
            <person name="Honore N."/>
            <person name="Garnier T."/>
            <person name="Churcher C.M."/>
            <person name="Harris D.E."/>
            <person name="Mungall K.L."/>
            <person name="Basham D."/>
            <person name="Brown D."/>
            <person name="Chillingworth T."/>
            <person name="Connor R."/>
            <person name="Davies R.M."/>
            <person name="Devlin K."/>
            <person name="Duthoy S."/>
            <person name="Feltwell T."/>
            <person name="Fraser A."/>
            <person name="Hamlin N."/>
            <person name="Holroyd S."/>
            <person name="Hornsby T."/>
            <person name="Jagels K."/>
            <person name="Lacroix C."/>
            <person name="Maclean J."/>
            <person name="Moule S."/>
            <person name="Murphy L.D."/>
            <person name="Oliver K."/>
            <person name="Quail M.A."/>
            <person name="Rajandream M.A."/>
            <person name="Rutherford K.M."/>
            <person name="Rutter S."/>
            <person name="Seeger K."/>
            <person name="Simon S."/>
            <person name="Simmonds M."/>
            <person name="Skelton J."/>
            <person name="Squares R."/>
            <person name="Squares S."/>
            <person name="Stevens K."/>
            <person name="Taylor K."/>
            <person name="Whitehead S."/>
            <person name="Woodward J.R."/>
            <person name="Barrell B.G."/>
        </authorList>
    </citation>
    <scope>NUCLEOTIDE SEQUENCE [LARGE SCALE GENOMIC DNA]</scope>
    <source>
        <strain>TN</strain>
    </source>
</reference>
<organism>
    <name type="scientific">Mycobacterium leprae (strain TN)</name>
    <dbReference type="NCBI Taxonomy" id="272631"/>
    <lineage>
        <taxon>Bacteria</taxon>
        <taxon>Bacillati</taxon>
        <taxon>Actinomycetota</taxon>
        <taxon>Actinomycetes</taxon>
        <taxon>Mycobacteriales</taxon>
        <taxon>Mycobacteriaceae</taxon>
        <taxon>Mycobacterium</taxon>
    </lineage>
</organism>
<comment type="function">
    <text evidence="1">Catalyzes the oxidation of either pyridoxine 5'-phosphate (PNP) or pyridoxamine 5'-phosphate (PMP) into pyridoxal 5'-phosphate (PLP).</text>
</comment>
<comment type="catalytic activity">
    <reaction evidence="1">
        <text>pyridoxamine 5'-phosphate + O2 + H2O = pyridoxal 5'-phosphate + H2O2 + NH4(+)</text>
        <dbReference type="Rhea" id="RHEA:15817"/>
        <dbReference type="ChEBI" id="CHEBI:15377"/>
        <dbReference type="ChEBI" id="CHEBI:15379"/>
        <dbReference type="ChEBI" id="CHEBI:16240"/>
        <dbReference type="ChEBI" id="CHEBI:28938"/>
        <dbReference type="ChEBI" id="CHEBI:58451"/>
        <dbReference type="ChEBI" id="CHEBI:597326"/>
        <dbReference type="EC" id="1.4.3.5"/>
    </reaction>
</comment>
<comment type="catalytic activity">
    <reaction evidence="1">
        <text>pyridoxine 5'-phosphate + O2 = pyridoxal 5'-phosphate + H2O2</text>
        <dbReference type="Rhea" id="RHEA:15149"/>
        <dbReference type="ChEBI" id="CHEBI:15379"/>
        <dbReference type="ChEBI" id="CHEBI:16240"/>
        <dbReference type="ChEBI" id="CHEBI:58589"/>
        <dbReference type="ChEBI" id="CHEBI:597326"/>
        <dbReference type="EC" id="1.4.3.5"/>
    </reaction>
</comment>
<comment type="cofactor">
    <cofactor evidence="1">
        <name>FMN</name>
        <dbReference type="ChEBI" id="CHEBI:58210"/>
    </cofactor>
    <text evidence="1">Binds 1 FMN per subunit.</text>
</comment>
<comment type="pathway">
    <text evidence="1">Cofactor metabolism; pyridoxal 5'-phosphate salvage; pyridoxal 5'-phosphate from pyridoxamine 5'-phosphate: step 1/1.</text>
</comment>
<comment type="pathway">
    <text evidence="1">Cofactor metabolism; pyridoxal 5'-phosphate salvage; pyridoxal 5'-phosphate from pyridoxine 5'-phosphate: step 1/1.</text>
</comment>
<comment type="subunit">
    <text evidence="1">Homodimer.</text>
</comment>
<comment type="similarity">
    <text evidence="1">Belongs to the pyridoxamine 5'-phosphate oxidase family.</text>
</comment>
<comment type="sequence caution" evidence="2">
    <conflict type="erroneous initiation">
        <sequence resource="EMBL-CDS" id="CAC31086"/>
    </conflict>
</comment>
<proteinExistence type="inferred from homology"/>
<keyword id="KW-0285">Flavoprotein</keyword>
<keyword id="KW-0288">FMN</keyword>
<keyword id="KW-0560">Oxidoreductase</keyword>
<keyword id="KW-0664">Pyridoxine biosynthesis</keyword>
<keyword id="KW-1185">Reference proteome</keyword>
<gene>
    <name evidence="1" type="primary">pdxH</name>
    <name type="ordered locus">ML2131</name>
    <name type="ORF">MLCB57.46</name>
</gene>
<protein>
    <recommendedName>
        <fullName evidence="1">Pyridoxine/pyridoxamine 5'-phosphate oxidase</fullName>
        <ecNumber evidence="1">1.4.3.5</ecNumber>
    </recommendedName>
    <alternativeName>
        <fullName evidence="1">PNP/PMP oxidase</fullName>
        <shortName evidence="1">PNPOx</shortName>
    </alternativeName>
    <alternativeName>
        <fullName evidence="1">Pyridoxal 5'-phosphate synthase</fullName>
    </alternativeName>
</protein>
<evidence type="ECO:0000255" key="1">
    <source>
        <dbReference type="HAMAP-Rule" id="MF_01629"/>
    </source>
</evidence>
<evidence type="ECO:0000305" key="2"/>
<accession>O33065</accession>
<sequence>MAGPDDQHLSGMRVEYGSVEKDGSPDLDTDWLYDGWLTLFCKWIDDAERAGVAEPNAMVLATVANGRPVSRSVLCKGADEAGIIFFTNYDSDKGDDLAATPYASVTFPWYQLGRQVHIRGPVSTVDPQVSEDYWSKRPRGSQLGAWASHQSRPIASRTALLDQLLEVTVRFADSELIPLPPNWGGYLIVPEVVEFWQGRENRVHNRIRVTGGCIERLQP</sequence>
<feature type="chain" id="PRO_0000167721" description="Pyridoxine/pyridoxamine 5'-phosphate oxidase">
    <location>
        <begin position="1"/>
        <end position="219"/>
    </location>
</feature>
<feature type="binding site" evidence="1">
    <location>
        <begin position="13"/>
        <end position="16"/>
    </location>
    <ligand>
        <name>substrate</name>
    </ligand>
</feature>
<feature type="binding site" evidence="1">
    <location>
        <begin position="71"/>
        <end position="76"/>
    </location>
    <ligand>
        <name>FMN</name>
        <dbReference type="ChEBI" id="CHEBI:58210"/>
    </ligand>
</feature>
<feature type="binding site" evidence="1">
    <location>
        <position position="76"/>
    </location>
    <ligand>
        <name>substrate</name>
    </ligand>
</feature>
<feature type="binding site" evidence="1">
    <location>
        <begin position="86"/>
        <end position="87"/>
    </location>
    <ligand>
        <name>FMN</name>
        <dbReference type="ChEBI" id="CHEBI:58210"/>
    </ligand>
</feature>
<feature type="binding site" evidence="1">
    <location>
        <position position="93"/>
    </location>
    <ligand>
        <name>FMN</name>
        <dbReference type="ChEBI" id="CHEBI:58210"/>
    </ligand>
</feature>
<feature type="binding site" evidence="1">
    <location>
        <position position="115"/>
    </location>
    <ligand>
        <name>FMN</name>
        <dbReference type="ChEBI" id="CHEBI:58210"/>
    </ligand>
</feature>
<feature type="binding site" evidence="1">
    <location>
        <position position="133"/>
    </location>
    <ligand>
        <name>substrate</name>
    </ligand>
</feature>
<feature type="binding site" evidence="1">
    <location>
        <position position="137"/>
    </location>
    <ligand>
        <name>substrate</name>
    </ligand>
</feature>
<feature type="binding site" evidence="1">
    <location>
        <position position="141"/>
    </location>
    <ligand>
        <name>substrate</name>
    </ligand>
</feature>
<feature type="binding site" evidence="1">
    <location>
        <begin position="150"/>
        <end position="151"/>
    </location>
    <ligand>
        <name>FMN</name>
        <dbReference type="ChEBI" id="CHEBI:58210"/>
    </ligand>
</feature>
<feature type="binding site" evidence="1">
    <location>
        <position position="196"/>
    </location>
    <ligand>
        <name>FMN</name>
        <dbReference type="ChEBI" id="CHEBI:58210"/>
    </ligand>
</feature>
<feature type="binding site" evidence="1">
    <location>
        <begin position="202"/>
        <end position="204"/>
    </location>
    <ligand>
        <name>substrate</name>
    </ligand>
</feature>
<feature type="binding site" evidence="1">
    <location>
        <position position="206"/>
    </location>
    <ligand>
        <name>FMN</name>
        <dbReference type="ChEBI" id="CHEBI:58210"/>
    </ligand>
</feature>